<protein>
    <recommendedName>
        <fullName>Ig kappa chain V-II region 7S34.1</fullName>
    </recommendedName>
</protein>
<accession>P01630</accession>
<organism>
    <name type="scientific">Mus musculus</name>
    <name type="common">Mouse</name>
    <dbReference type="NCBI Taxonomy" id="10090"/>
    <lineage>
        <taxon>Eukaryota</taxon>
        <taxon>Metazoa</taxon>
        <taxon>Chordata</taxon>
        <taxon>Craniata</taxon>
        <taxon>Vertebrata</taxon>
        <taxon>Euteleostomi</taxon>
        <taxon>Mammalia</taxon>
        <taxon>Eutheria</taxon>
        <taxon>Euarchontoglires</taxon>
        <taxon>Glires</taxon>
        <taxon>Rodentia</taxon>
        <taxon>Myomorpha</taxon>
        <taxon>Muroidea</taxon>
        <taxon>Muridae</taxon>
        <taxon>Murinae</taxon>
        <taxon>Mus</taxon>
        <taxon>Mus</taxon>
    </lineage>
</organism>
<name>KV2A6_MOUSE</name>
<evidence type="ECO:0000255" key="1">
    <source>
        <dbReference type="PROSITE-ProRule" id="PRU00114"/>
    </source>
</evidence>
<evidence type="ECO:0007829" key="2">
    <source>
        <dbReference type="PDB" id="5YD3"/>
    </source>
</evidence>
<proteinExistence type="evidence at protein level"/>
<comment type="miscellaneous">
    <text>This chain is from a hybridoma-derived monoclonal antibody against the streptococcal group A polysaccharide.</text>
</comment>
<sequence>DIVMTQTAPSALVTPGESVSISCRSSKSLLHSNGNTYLYWFLQRPGQCPQLLIYRMSNLASGVPDRFSGSGSGTAFTLRISRVEAEDVGVYYCMQQREYPYTFGGGTKLEIKR</sequence>
<reference key="1">
    <citation type="journal article" date="1983" name="Biochem. J.">
        <title>A new isotype sequence (V kappa 27) of the variable region of kappa-light chains from a mouse hybridoma-derived anti-(streptococcal group A polysaccharide) antibody containing an additional cysteine residue. Application of the dimethylaminoazobenzene isothiocyanate technique for the isolation of peptides.</title>
        <authorList>
            <person name="Chang J.-Y."/>
            <person name="Herbst H."/>
            <person name="Aebersold R."/>
            <person name="Braun D.G."/>
        </authorList>
    </citation>
    <scope>PROTEIN SEQUENCE</scope>
</reference>
<feature type="chain" id="PRO_0000059775" description="Ig kappa chain V-II region 7S34.1">
    <location>
        <begin position="1"/>
        <end position="113" status="greater than"/>
    </location>
</feature>
<feature type="region of interest" description="Framework-1">
    <location>
        <begin position="1"/>
        <end position="23"/>
    </location>
</feature>
<feature type="region of interest" description="Complementarity-determining-1">
    <location>
        <begin position="24"/>
        <end position="39"/>
    </location>
</feature>
<feature type="region of interest" description="Framework-2">
    <location>
        <begin position="40"/>
        <end position="54"/>
    </location>
</feature>
<feature type="region of interest" description="Complementarity-determining-2">
    <location>
        <begin position="55"/>
        <end position="61"/>
    </location>
</feature>
<feature type="region of interest" description="Framework-3">
    <location>
        <begin position="62"/>
        <end position="93"/>
    </location>
</feature>
<feature type="region of interest" description="Complementarity-determining-3">
    <location>
        <begin position="94"/>
        <end position="102"/>
    </location>
</feature>
<feature type="region of interest" description="Framework-4">
    <location>
        <begin position="103"/>
        <end position="112"/>
    </location>
</feature>
<feature type="disulfide bond" evidence="1">
    <location>
        <begin position="23"/>
        <end position="93"/>
    </location>
</feature>
<feature type="non-terminal residue">
    <location>
        <position position="113"/>
    </location>
</feature>
<feature type="strand" evidence="2">
    <location>
        <begin position="9"/>
        <end position="13"/>
    </location>
</feature>
<feature type="strand" evidence="2">
    <location>
        <begin position="19"/>
        <end position="27"/>
    </location>
</feature>
<feature type="strand" evidence="2">
    <location>
        <begin position="38"/>
        <end position="43"/>
    </location>
</feature>
<feature type="strand" evidence="2">
    <location>
        <begin position="49"/>
        <end position="54"/>
    </location>
</feature>
<feature type="turn" evidence="2">
    <location>
        <begin position="55"/>
        <end position="57"/>
    </location>
</feature>
<feature type="strand" evidence="2">
    <location>
        <begin position="67"/>
        <end position="71"/>
    </location>
</feature>
<feature type="strand" evidence="2">
    <location>
        <begin position="73"/>
        <end position="80"/>
    </location>
</feature>
<feature type="helix" evidence="2">
    <location>
        <begin position="85"/>
        <end position="87"/>
    </location>
</feature>
<feature type="strand" evidence="2">
    <location>
        <begin position="89"/>
        <end position="95"/>
    </location>
</feature>
<feature type="strand" evidence="2">
    <location>
        <begin position="97"/>
        <end position="100"/>
    </location>
</feature>
<feature type="strand" evidence="2">
    <location>
        <begin position="107"/>
        <end position="111"/>
    </location>
</feature>
<dbReference type="PIR" id="A01913">
    <property type="entry name" value="KVMS7S"/>
</dbReference>
<dbReference type="PDB" id="5YD3">
    <property type="method" value="X-ray"/>
    <property type="resolution" value="1.35 A"/>
    <property type="chains" value="A/C/E/G=1-112"/>
</dbReference>
<dbReference type="PDB" id="5YD4">
    <property type="method" value="X-ray"/>
    <property type="resolution" value="1.35 A"/>
    <property type="chains" value="A/C/E/G=1-112"/>
</dbReference>
<dbReference type="PDB" id="5YD5">
    <property type="method" value="X-ray"/>
    <property type="resolution" value="1.96 A"/>
    <property type="chains" value="A/C=1-112"/>
</dbReference>
<dbReference type="PDBsum" id="5YD3"/>
<dbReference type="PDBsum" id="5YD4"/>
<dbReference type="PDBsum" id="5YD5"/>
<dbReference type="SMR" id="P01630"/>
<dbReference type="FunCoup" id="P01630">
    <property type="interactions" value="525"/>
</dbReference>
<dbReference type="IntAct" id="P01630">
    <property type="interactions" value="1"/>
</dbReference>
<dbReference type="GlyGen" id="P01630">
    <property type="glycosylation" value="1 site"/>
</dbReference>
<dbReference type="InParanoid" id="P01630"/>
<dbReference type="Proteomes" id="UP000000589">
    <property type="component" value="Unplaced"/>
</dbReference>
<dbReference type="RNAct" id="P01630">
    <property type="molecule type" value="protein"/>
</dbReference>
<dbReference type="GO" id="GO:0019814">
    <property type="term" value="C:immunoglobulin complex"/>
    <property type="evidence" value="ECO:0000318"/>
    <property type="project" value="GO_Central"/>
</dbReference>
<dbReference type="GO" id="GO:0003823">
    <property type="term" value="F:antigen binding"/>
    <property type="evidence" value="ECO:0007669"/>
    <property type="project" value="UniProtKB-KW"/>
</dbReference>
<dbReference type="GO" id="GO:0002250">
    <property type="term" value="P:adaptive immune response"/>
    <property type="evidence" value="ECO:0007669"/>
    <property type="project" value="UniProtKB-KW"/>
</dbReference>
<dbReference type="GO" id="GO:0006955">
    <property type="term" value="P:immune response"/>
    <property type="evidence" value="ECO:0000318"/>
    <property type="project" value="GO_Central"/>
</dbReference>
<dbReference type="CDD" id="cd04980">
    <property type="entry name" value="IgV_L_kappa"/>
    <property type="match status" value="1"/>
</dbReference>
<dbReference type="FunFam" id="2.60.40.10:FF:000365">
    <property type="entry name" value="If kappa light chain"/>
    <property type="match status" value="1"/>
</dbReference>
<dbReference type="Gene3D" id="2.60.40.10">
    <property type="entry name" value="Immunoglobulins"/>
    <property type="match status" value="1"/>
</dbReference>
<dbReference type="InterPro" id="IPR007110">
    <property type="entry name" value="Ig-like_dom"/>
</dbReference>
<dbReference type="InterPro" id="IPR036179">
    <property type="entry name" value="Ig-like_dom_sf"/>
</dbReference>
<dbReference type="InterPro" id="IPR013783">
    <property type="entry name" value="Ig-like_fold"/>
</dbReference>
<dbReference type="InterPro" id="IPR003599">
    <property type="entry name" value="Ig_sub"/>
</dbReference>
<dbReference type="InterPro" id="IPR013106">
    <property type="entry name" value="Ig_V-set"/>
</dbReference>
<dbReference type="InterPro" id="IPR050150">
    <property type="entry name" value="IgV_Light_Chain"/>
</dbReference>
<dbReference type="PANTHER" id="PTHR23267">
    <property type="entry name" value="IMMUNOGLOBULIN LIGHT CHAIN"/>
    <property type="match status" value="1"/>
</dbReference>
<dbReference type="Pfam" id="PF07686">
    <property type="entry name" value="V-set"/>
    <property type="match status" value="1"/>
</dbReference>
<dbReference type="SMART" id="SM00409">
    <property type="entry name" value="IG"/>
    <property type="match status" value="1"/>
</dbReference>
<dbReference type="SMART" id="SM00406">
    <property type="entry name" value="IGv"/>
    <property type="match status" value="1"/>
</dbReference>
<dbReference type="SUPFAM" id="SSF48726">
    <property type="entry name" value="Immunoglobulin"/>
    <property type="match status" value="1"/>
</dbReference>
<dbReference type="PROSITE" id="PS50835">
    <property type="entry name" value="IG_LIKE"/>
    <property type="match status" value="1"/>
</dbReference>
<keyword id="KW-0002">3D-structure</keyword>
<keyword id="KW-1064">Adaptive immunity</keyword>
<keyword id="KW-0903">Direct protein sequencing</keyword>
<keyword id="KW-1015">Disulfide bond</keyword>
<keyword id="KW-0374">Hybridoma</keyword>
<keyword id="KW-0391">Immunity</keyword>
<keyword id="KW-1280">Immunoglobulin</keyword>
<keyword id="KW-0502">Monoclonal antibody</keyword>
<keyword id="KW-1185">Reference proteome</keyword>